<gene>
    <name evidence="1" type="primary">gatA-2</name>
    <name type="ordered locus">SSO0957</name>
</gene>
<protein>
    <recommendedName>
        <fullName evidence="1">Glutamyl-tRNA(Gln) amidotransferase subunit A</fullName>
        <shortName evidence="1">Glu-ADT subunit A</shortName>
        <ecNumber evidence="1">6.3.5.7</ecNumber>
    </recommendedName>
</protein>
<evidence type="ECO:0000255" key="1">
    <source>
        <dbReference type="HAMAP-Rule" id="MF_00120"/>
    </source>
</evidence>
<name>GATA_SACS2</name>
<dbReference type="EC" id="6.3.5.7" evidence="1"/>
<dbReference type="EMBL" id="AE006641">
    <property type="protein sequence ID" value="AAK41231.1"/>
    <property type="molecule type" value="Genomic_DNA"/>
</dbReference>
<dbReference type="PIR" id="H90246">
    <property type="entry name" value="H90246"/>
</dbReference>
<dbReference type="SMR" id="Q97ZG1"/>
<dbReference type="FunCoup" id="Q97ZG1">
    <property type="interactions" value="139"/>
</dbReference>
<dbReference type="STRING" id="273057.SSO0957"/>
<dbReference type="PaxDb" id="273057-SSO0957"/>
<dbReference type="EnsemblBacteria" id="AAK41231">
    <property type="protein sequence ID" value="AAK41231"/>
    <property type="gene ID" value="SSO0957"/>
</dbReference>
<dbReference type="KEGG" id="sso:SSO0957"/>
<dbReference type="PATRIC" id="fig|273057.12.peg.953"/>
<dbReference type="eggNOG" id="arCOG01717">
    <property type="taxonomic scope" value="Archaea"/>
</dbReference>
<dbReference type="HOGENOM" id="CLU_009600_0_3_2"/>
<dbReference type="InParanoid" id="Q97ZG1"/>
<dbReference type="PhylomeDB" id="Q97ZG1"/>
<dbReference type="Proteomes" id="UP000001974">
    <property type="component" value="Chromosome"/>
</dbReference>
<dbReference type="GO" id="GO:0030956">
    <property type="term" value="C:glutamyl-tRNA(Gln) amidotransferase complex"/>
    <property type="evidence" value="ECO:0007669"/>
    <property type="project" value="InterPro"/>
</dbReference>
<dbReference type="GO" id="GO:0005524">
    <property type="term" value="F:ATP binding"/>
    <property type="evidence" value="ECO:0007669"/>
    <property type="project" value="UniProtKB-KW"/>
</dbReference>
<dbReference type="GO" id="GO:0050567">
    <property type="term" value="F:glutaminyl-tRNA synthase (glutamine-hydrolyzing) activity"/>
    <property type="evidence" value="ECO:0007669"/>
    <property type="project" value="UniProtKB-UniRule"/>
</dbReference>
<dbReference type="GO" id="GO:0006412">
    <property type="term" value="P:translation"/>
    <property type="evidence" value="ECO:0007669"/>
    <property type="project" value="UniProtKB-UniRule"/>
</dbReference>
<dbReference type="Gene3D" id="3.90.1300.10">
    <property type="entry name" value="Amidase signature (AS) domain"/>
    <property type="match status" value="1"/>
</dbReference>
<dbReference type="HAMAP" id="MF_00120">
    <property type="entry name" value="GatA"/>
    <property type="match status" value="1"/>
</dbReference>
<dbReference type="InterPro" id="IPR000120">
    <property type="entry name" value="Amidase"/>
</dbReference>
<dbReference type="InterPro" id="IPR020556">
    <property type="entry name" value="Amidase_CS"/>
</dbReference>
<dbReference type="InterPro" id="IPR023631">
    <property type="entry name" value="Amidase_dom"/>
</dbReference>
<dbReference type="InterPro" id="IPR036928">
    <property type="entry name" value="AS_sf"/>
</dbReference>
<dbReference type="InterPro" id="IPR004412">
    <property type="entry name" value="GatA"/>
</dbReference>
<dbReference type="NCBIfam" id="TIGR00132">
    <property type="entry name" value="gatA"/>
    <property type="match status" value="1"/>
</dbReference>
<dbReference type="PANTHER" id="PTHR11895:SF7">
    <property type="entry name" value="GLUTAMYL-TRNA(GLN) AMIDOTRANSFERASE SUBUNIT A, MITOCHONDRIAL"/>
    <property type="match status" value="1"/>
</dbReference>
<dbReference type="PANTHER" id="PTHR11895">
    <property type="entry name" value="TRANSAMIDASE"/>
    <property type="match status" value="1"/>
</dbReference>
<dbReference type="Pfam" id="PF01425">
    <property type="entry name" value="Amidase"/>
    <property type="match status" value="1"/>
</dbReference>
<dbReference type="SUPFAM" id="SSF75304">
    <property type="entry name" value="Amidase signature (AS) enzymes"/>
    <property type="match status" value="1"/>
</dbReference>
<dbReference type="PROSITE" id="PS00571">
    <property type="entry name" value="AMIDASES"/>
    <property type="match status" value="1"/>
</dbReference>
<accession>Q97ZG1</accession>
<reference key="1">
    <citation type="journal article" date="2001" name="Proc. Natl. Acad. Sci. U.S.A.">
        <title>The complete genome of the crenarchaeon Sulfolobus solfataricus P2.</title>
        <authorList>
            <person name="She Q."/>
            <person name="Singh R.K."/>
            <person name="Confalonieri F."/>
            <person name="Zivanovic Y."/>
            <person name="Allard G."/>
            <person name="Awayez M.J."/>
            <person name="Chan-Weiher C.C.-Y."/>
            <person name="Clausen I.G."/>
            <person name="Curtis B.A."/>
            <person name="De Moors A."/>
            <person name="Erauso G."/>
            <person name="Fletcher C."/>
            <person name="Gordon P.M.K."/>
            <person name="Heikamp-de Jong I."/>
            <person name="Jeffries A.C."/>
            <person name="Kozera C.J."/>
            <person name="Medina N."/>
            <person name="Peng X."/>
            <person name="Thi-Ngoc H.P."/>
            <person name="Redder P."/>
            <person name="Schenk M.E."/>
            <person name="Theriault C."/>
            <person name="Tolstrup N."/>
            <person name="Charlebois R.L."/>
            <person name="Doolittle W.F."/>
            <person name="Duguet M."/>
            <person name="Gaasterland T."/>
            <person name="Garrett R.A."/>
            <person name="Ragan M.A."/>
            <person name="Sensen C.W."/>
            <person name="Van der Oost J."/>
        </authorList>
    </citation>
    <scope>NUCLEOTIDE SEQUENCE [LARGE SCALE GENOMIC DNA]</scope>
    <source>
        <strain>ATCC 35092 / DSM 1617 / JCM 11322 / P2</strain>
    </source>
</reference>
<proteinExistence type="inferred from homology"/>
<keyword id="KW-0067">ATP-binding</keyword>
<keyword id="KW-0436">Ligase</keyword>
<keyword id="KW-0547">Nucleotide-binding</keyword>
<keyword id="KW-0648">Protein biosynthesis</keyword>
<keyword id="KW-1185">Reference proteome</keyword>
<organism>
    <name type="scientific">Saccharolobus solfataricus (strain ATCC 35092 / DSM 1617 / JCM 11322 / P2)</name>
    <name type="common">Sulfolobus solfataricus</name>
    <dbReference type="NCBI Taxonomy" id="273057"/>
    <lineage>
        <taxon>Archaea</taxon>
        <taxon>Thermoproteota</taxon>
        <taxon>Thermoprotei</taxon>
        <taxon>Sulfolobales</taxon>
        <taxon>Sulfolobaceae</taxon>
        <taxon>Saccharolobus</taxon>
    </lineage>
</organism>
<comment type="function">
    <text evidence="1">Allows the formation of correctly charged Gln-tRNA(Gln) through the transamidation of misacylated Glu-tRNA(Gln) in organisms which lack glutaminyl-tRNA synthetase. The reaction takes place in the presence of glutamine and ATP through an activated gamma-phospho-Glu-tRNA(Gln).</text>
</comment>
<comment type="catalytic activity">
    <reaction evidence="1">
        <text>L-glutamyl-tRNA(Gln) + L-glutamine + ATP + H2O = L-glutaminyl-tRNA(Gln) + L-glutamate + ADP + phosphate + H(+)</text>
        <dbReference type="Rhea" id="RHEA:17521"/>
        <dbReference type="Rhea" id="RHEA-COMP:9681"/>
        <dbReference type="Rhea" id="RHEA-COMP:9684"/>
        <dbReference type="ChEBI" id="CHEBI:15377"/>
        <dbReference type="ChEBI" id="CHEBI:15378"/>
        <dbReference type="ChEBI" id="CHEBI:29985"/>
        <dbReference type="ChEBI" id="CHEBI:30616"/>
        <dbReference type="ChEBI" id="CHEBI:43474"/>
        <dbReference type="ChEBI" id="CHEBI:58359"/>
        <dbReference type="ChEBI" id="CHEBI:78520"/>
        <dbReference type="ChEBI" id="CHEBI:78521"/>
        <dbReference type="ChEBI" id="CHEBI:456216"/>
        <dbReference type="EC" id="6.3.5.7"/>
    </reaction>
</comment>
<comment type="subunit">
    <text evidence="1">Heterotrimer of A, B and C subunits.</text>
</comment>
<comment type="similarity">
    <text evidence="1">Belongs to the amidase family. GatA subfamily.</text>
</comment>
<feature type="chain" id="PRO_0000105237" description="Glutamyl-tRNA(Gln) amidotransferase subunit A">
    <location>
        <begin position="1"/>
        <end position="478"/>
    </location>
</feature>
<feature type="active site" description="Charge relay system" evidence="1">
    <location>
        <position position="72"/>
    </location>
</feature>
<feature type="active site" description="Charge relay system" evidence="1">
    <location>
        <position position="147"/>
    </location>
</feature>
<feature type="active site" description="Acyl-ester intermediate" evidence="1">
    <location>
        <position position="171"/>
    </location>
</feature>
<sequence length="478" mass="52839">MNRIMIVDLVNDLRNKNLEAEEYIERTYEKIGKYDKYINAFITIRSKEEVLKEVKESINKGGKLAGVLIAIKDNISTEGIRTTCASKMLEDYIPPYDATVIEKLKKEGAVIIGKTNMDEFAMGSTTETSYFGPTRNPWDLERTPGGSSGGSGAALAAGYVELALGSDTGGSIRAPAAYNAIFGLKPSYGTVSRFGLVAYANSLEQIGPMARNAEDLGLLFSIIAGPDERDATTINLNLNFELKERSVKNVRIGVLSDILEMSEKPVSGVIKDVVNKLSSEGALIEDTKLGNAEYALPAYYIIAMSEASSNLARYDGVRYGYSKYMEGNWREVYAKNRGEAFGMEVKRRILLGSFILSAGYYEEFYLKALKVRNLIKKNLDELFKKYDILLSPTMPILPPKIGEVINDPVRMYAMDLNTVIANLAAIPALSMPVGFYSDLPIGLQLMGKYLSDIYLINISSFIERNITKLYNLTASVKI</sequence>